<sequence length="379" mass="43073">MSEPLDLNQLAQKIKQWGLELGFQQVGITDTDLSESEPKLQAWLDKQYHGEMDWMARHGMLRARPHELLPGTLRVISVRMNYLPANAAFASTLKNPKLGYVSRYALGRDYHKLLRNRLKKLGEMIQQHCVSLNFRPFVDSAPILERPLAEKAGLGWTGKHSLILNREAGSFFFLGELLVDIPLPVDQPVEEGCGKCVACMTICPTGAIVEPYTVDARRCISYLTIELEGAIPEELRPLMGNRIYGCDDCQLICPWNRYSQLTTEEDFSPRKPLHAPELIELFAWSEEKFLKVTEGSAIRRIGHLRWLRNIAVALGNAPWDETILTALESRKGEHPLLDEHIAWAIAQQIERRNACIVEVQLPKKQRLVRVIEKGLPRDA</sequence>
<feature type="chain" id="PRO_0000159304" description="Epoxyqueuosine reductase">
    <location>
        <begin position="1"/>
        <end position="379"/>
    </location>
</feature>
<feature type="domain" description="4Fe-4S ferredoxin-type" evidence="1">
    <location>
        <begin position="181"/>
        <end position="213"/>
    </location>
</feature>
<feature type="active site" description="Proton donor" evidence="1">
    <location>
        <position position="139"/>
    </location>
</feature>
<feature type="binding site" evidence="1">
    <location>
        <position position="193"/>
    </location>
    <ligand>
        <name>[4Fe-4S] cluster</name>
        <dbReference type="ChEBI" id="CHEBI:49883"/>
        <label>1</label>
    </ligand>
</feature>
<feature type="binding site" evidence="1">
    <location>
        <position position="196"/>
    </location>
    <ligand>
        <name>[4Fe-4S] cluster</name>
        <dbReference type="ChEBI" id="CHEBI:49883"/>
        <label>1</label>
    </ligand>
</feature>
<feature type="binding site" evidence="1">
    <location>
        <position position="199"/>
    </location>
    <ligand>
        <name>[4Fe-4S] cluster</name>
        <dbReference type="ChEBI" id="CHEBI:49883"/>
        <label>1</label>
    </ligand>
</feature>
<feature type="binding site" evidence="1">
    <location>
        <position position="203"/>
    </location>
    <ligand>
        <name>[4Fe-4S] cluster</name>
        <dbReference type="ChEBI" id="CHEBI:49883"/>
        <label>2</label>
    </ligand>
</feature>
<feature type="binding site" evidence="1">
    <location>
        <position position="219"/>
    </location>
    <ligand>
        <name>[4Fe-4S] cluster</name>
        <dbReference type="ChEBI" id="CHEBI:49883"/>
        <label>2</label>
    </ligand>
</feature>
<feature type="binding site" evidence="1">
    <location>
        <position position="246"/>
    </location>
    <ligand>
        <name>[4Fe-4S] cluster</name>
        <dbReference type="ChEBI" id="CHEBI:49883"/>
        <label>2</label>
    </ligand>
</feature>
<feature type="binding site" evidence="1">
    <location>
        <position position="249"/>
    </location>
    <ligand>
        <name>[4Fe-4S] cluster</name>
        <dbReference type="ChEBI" id="CHEBI:49883"/>
        <label>2</label>
    </ligand>
</feature>
<feature type="binding site" evidence="1">
    <location>
        <position position="253"/>
    </location>
    <ligand>
        <name>[4Fe-4S] cluster</name>
        <dbReference type="ChEBI" id="CHEBI:49883"/>
        <label>1</label>
    </ligand>
</feature>
<keyword id="KW-0004">4Fe-4S</keyword>
<keyword id="KW-0963">Cytoplasm</keyword>
<keyword id="KW-0408">Iron</keyword>
<keyword id="KW-0411">Iron-sulfur</keyword>
<keyword id="KW-0479">Metal-binding</keyword>
<keyword id="KW-0560">Oxidoreductase</keyword>
<keyword id="KW-0671">Queuosine biosynthesis</keyword>
<keyword id="KW-1185">Reference proteome</keyword>
<keyword id="KW-0819">tRNA processing</keyword>
<accession>P39288</accession>
<accession>Q2M6D9</accession>
<evidence type="ECO:0000255" key="1">
    <source>
        <dbReference type="HAMAP-Rule" id="MF_00916"/>
    </source>
</evidence>
<evidence type="ECO:0000269" key="2">
    <source>
    </source>
</evidence>
<proteinExistence type="inferred from homology"/>
<dbReference type="EC" id="1.17.99.6" evidence="1"/>
<dbReference type="EMBL" id="U14003">
    <property type="protein sequence ID" value="AAA97062.1"/>
    <property type="molecule type" value="Genomic_DNA"/>
</dbReference>
<dbReference type="EMBL" id="U00096">
    <property type="protein sequence ID" value="AAC77123.1"/>
    <property type="molecule type" value="Genomic_DNA"/>
</dbReference>
<dbReference type="EMBL" id="AP009048">
    <property type="protein sequence ID" value="BAE78167.1"/>
    <property type="molecule type" value="Genomic_DNA"/>
</dbReference>
<dbReference type="PIR" id="S56391">
    <property type="entry name" value="S56391"/>
</dbReference>
<dbReference type="RefSeq" id="NP_418587.1">
    <property type="nucleotide sequence ID" value="NC_000913.3"/>
</dbReference>
<dbReference type="RefSeq" id="WP_001294219.1">
    <property type="nucleotide sequence ID" value="NZ_STEB01000013.1"/>
</dbReference>
<dbReference type="SMR" id="P39288"/>
<dbReference type="BioGRID" id="4262703">
    <property type="interactions" value="7"/>
</dbReference>
<dbReference type="FunCoup" id="P39288">
    <property type="interactions" value="297"/>
</dbReference>
<dbReference type="IntAct" id="P39288">
    <property type="interactions" value="2"/>
</dbReference>
<dbReference type="STRING" id="511145.b4166"/>
<dbReference type="PaxDb" id="511145-b4166"/>
<dbReference type="EnsemblBacteria" id="AAC77123">
    <property type="protein sequence ID" value="AAC77123"/>
    <property type="gene ID" value="b4166"/>
</dbReference>
<dbReference type="GeneID" id="75202400"/>
<dbReference type="GeneID" id="948686"/>
<dbReference type="KEGG" id="ecj:JW4124"/>
<dbReference type="KEGG" id="eco:b4166"/>
<dbReference type="KEGG" id="ecoc:C3026_22515"/>
<dbReference type="PATRIC" id="fig|1411691.4.peg.2535"/>
<dbReference type="EchoBASE" id="EB2374"/>
<dbReference type="eggNOG" id="COG1600">
    <property type="taxonomic scope" value="Bacteria"/>
</dbReference>
<dbReference type="HOGENOM" id="CLU_030790_0_1_6"/>
<dbReference type="InParanoid" id="P39288"/>
<dbReference type="OMA" id="FPAPYQL"/>
<dbReference type="OrthoDB" id="9784571at2"/>
<dbReference type="PhylomeDB" id="P39288"/>
<dbReference type="BioCyc" id="EcoCyc:G7843-MONOMER"/>
<dbReference type="BioCyc" id="MetaCyc:G7843-MONOMER"/>
<dbReference type="BRENDA" id="1.17.99.6">
    <property type="organism ID" value="2026"/>
</dbReference>
<dbReference type="UniPathway" id="UPA00392"/>
<dbReference type="PRO" id="PR:P39288"/>
<dbReference type="Proteomes" id="UP000000625">
    <property type="component" value="Chromosome"/>
</dbReference>
<dbReference type="GO" id="GO:0005737">
    <property type="term" value="C:cytoplasm"/>
    <property type="evidence" value="ECO:0007669"/>
    <property type="project" value="UniProtKB-SubCell"/>
</dbReference>
<dbReference type="GO" id="GO:0051539">
    <property type="term" value="F:4 iron, 4 sulfur cluster binding"/>
    <property type="evidence" value="ECO:0007669"/>
    <property type="project" value="UniProtKB-KW"/>
</dbReference>
<dbReference type="GO" id="GO:0052693">
    <property type="term" value="F:epoxyqueuosine reductase activity"/>
    <property type="evidence" value="ECO:0000315"/>
    <property type="project" value="EcoCyc"/>
</dbReference>
<dbReference type="GO" id="GO:0046872">
    <property type="term" value="F:metal ion binding"/>
    <property type="evidence" value="ECO:0007669"/>
    <property type="project" value="UniProtKB-KW"/>
</dbReference>
<dbReference type="GO" id="GO:0008616">
    <property type="term" value="P:queuosine biosynthetic process"/>
    <property type="evidence" value="ECO:0000315"/>
    <property type="project" value="EcoCyc"/>
</dbReference>
<dbReference type="GO" id="GO:0006400">
    <property type="term" value="P:tRNA modification"/>
    <property type="evidence" value="ECO:0007669"/>
    <property type="project" value="UniProtKB-UniRule"/>
</dbReference>
<dbReference type="FunFam" id="3.30.70.20:FF:000017">
    <property type="entry name" value="Epoxyqueuosine reductase"/>
    <property type="match status" value="1"/>
</dbReference>
<dbReference type="Gene3D" id="3.30.70.20">
    <property type="match status" value="1"/>
</dbReference>
<dbReference type="HAMAP" id="MF_00916">
    <property type="entry name" value="QueG"/>
    <property type="match status" value="1"/>
</dbReference>
<dbReference type="InterPro" id="IPR017896">
    <property type="entry name" value="4Fe4S_Fe-S-bd"/>
</dbReference>
<dbReference type="InterPro" id="IPR017900">
    <property type="entry name" value="4Fe4S_Fe_S_CS"/>
</dbReference>
<dbReference type="InterPro" id="IPR004453">
    <property type="entry name" value="QueG"/>
</dbReference>
<dbReference type="InterPro" id="IPR013542">
    <property type="entry name" value="QueG_DUF1730"/>
</dbReference>
<dbReference type="NCBIfam" id="TIGR00276">
    <property type="entry name" value="tRNA epoxyqueuosine(34) reductase QueG"/>
    <property type="match status" value="1"/>
</dbReference>
<dbReference type="PANTHER" id="PTHR30002">
    <property type="entry name" value="EPOXYQUEUOSINE REDUCTASE"/>
    <property type="match status" value="1"/>
</dbReference>
<dbReference type="PANTHER" id="PTHR30002:SF4">
    <property type="entry name" value="EPOXYQUEUOSINE REDUCTASE"/>
    <property type="match status" value="1"/>
</dbReference>
<dbReference type="Pfam" id="PF13484">
    <property type="entry name" value="Fer4_16"/>
    <property type="match status" value="1"/>
</dbReference>
<dbReference type="Pfam" id="PF08331">
    <property type="entry name" value="QueG_DUF1730"/>
    <property type="match status" value="1"/>
</dbReference>
<dbReference type="SUPFAM" id="SSF46548">
    <property type="entry name" value="alpha-helical ferredoxin"/>
    <property type="match status" value="1"/>
</dbReference>
<dbReference type="PROSITE" id="PS00198">
    <property type="entry name" value="4FE4S_FER_1"/>
    <property type="match status" value="1"/>
</dbReference>
<dbReference type="PROSITE" id="PS51379">
    <property type="entry name" value="4FE4S_FER_2"/>
    <property type="match status" value="1"/>
</dbReference>
<comment type="function">
    <text evidence="1">Catalyzes the conversion of epoxyqueuosine (oQ) to queuosine (Q), which is a hypermodified base found in the wobble positions of tRNA(Asp), tRNA(Asn), tRNA(His) and tRNA(Tyr).</text>
</comment>
<comment type="catalytic activity">
    <reaction evidence="1">
        <text>epoxyqueuosine(34) in tRNA + AH2 = queuosine(34) in tRNA + A + H2O</text>
        <dbReference type="Rhea" id="RHEA:32159"/>
        <dbReference type="Rhea" id="RHEA-COMP:18571"/>
        <dbReference type="Rhea" id="RHEA-COMP:18582"/>
        <dbReference type="ChEBI" id="CHEBI:13193"/>
        <dbReference type="ChEBI" id="CHEBI:15377"/>
        <dbReference type="ChEBI" id="CHEBI:17499"/>
        <dbReference type="ChEBI" id="CHEBI:194431"/>
        <dbReference type="ChEBI" id="CHEBI:194443"/>
        <dbReference type="EC" id="1.17.99.6"/>
    </reaction>
</comment>
<comment type="cofactor">
    <cofactor evidence="1">
        <name>cob(II)alamin</name>
        <dbReference type="ChEBI" id="CHEBI:16304"/>
    </cofactor>
</comment>
<comment type="cofactor">
    <cofactor evidence="1">
        <name>[4Fe-4S] cluster</name>
        <dbReference type="ChEBI" id="CHEBI:49883"/>
    </cofactor>
    <text evidence="1">Binds 2 [4Fe-4S] clusters per monomer.</text>
</comment>
<comment type="pathway">
    <text evidence="1 2">tRNA modification; tRNA-queuosine biosynthesis.</text>
</comment>
<comment type="subunit">
    <text evidence="1">Monomer.</text>
</comment>
<comment type="subcellular location">
    <subcellularLocation>
        <location evidence="1">Cytoplasm</location>
    </subcellularLocation>
</comment>
<comment type="disruption phenotype">
    <text evidence="2">RNA from mutants accumulates epoxyqueuosine and lacks queuosine.</text>
</comment>
<comment type="similarity">
    <text evidence="1">Belongs to the QueG family.</text>
</comment>
<organism>
    <name type="scientific">Escherichia coli (strain K12)</name>
    <dbReference type="NCBI Taxonomy" id="83333"/>
    <lineage>
        <taxon>Bacteria</taxon>
        <taxon>Pseudomonadati</taxon>
        <taxon>Pseudomonadota</taxon>
        <taxon>Gammaproteobacteria</taxon>
        <taxon>Enterobacterales</taxon>
        <taxon>Enterobacteriaceae</taxon>
        <taxon>Escherichia</taxon>
    </lineage>
</organism>
<protein>
    <recommendedName>
        <fullName evidence="1">Epoxyqueuosine reductase</fullName>
        <ecNumber evidence="1">1.17.99.6</ecNumber>
    </recommendedName>
    <alternativeName>
        <fullName evidence="1">Queuosine biosynthesis protein QueG</fullName>
    </alternativeName>
</protein>
<gene>
    <name evidence="1" type="primary">queG</name>
    <name type="synonym">yjeS</name>
    <name type="ordered locus">b4166</name>
    <name type="ordered locus">JW4124</name>
</gene>
<reference key="1">
    <citation type="journal article" date="1995" name="Nucleic Acids Res.">
        <title>Analysis of the Escherichia coli genome VI: DNA sequence of the region from 92.8 through 100 minutes.</title>
        <authorList>
            <person name="Burland V.D."/>
            <person name="Plunkett G. III"/>
            <person name="Sofia H.J."/>
            <person name="Daniels D.L."/>
            <person name="Blattner F.R."/>
        </authorList>
    </citation>
    <scope>NUCLEOTIDE SEQUENCE [LARGE SCALE GENOMIC DNA]</scope>
    <source>
        <strain>K12 / MG1655 / ATCC 47076</strain>
    </source>
</reference>
<reference key="2">
    <citation type="journal article" date="1997" name="Science">
        <title>The complete genome sequence of Escherichia coli K-12.</title>
        <authorList>
            <person name="Blattner F.R."/>
            <person name="Plunkett G. III"/>
            <person name="Bloch C.A."/>
            <person name="Perna N.T."/>
            <person name="Burland V."/>
            <person name="Riley M."/>
            <person name="Collado-Vides J."/>
            <person name="Glasner J.D."/>
            <person name="Rode C.K."/>
            <person name="Mayhew G.F."/>
            <person name="Gregor J."/>
            <person name="Davis N.W."/>
            <person name="Kirkpatrick H.A."/>
            <person name="Goeden M.A."/>
            <person name="Rose D.J."/>
            <person name="Mau B."/>
            <person name="Shao Y."/>
        </authorList>
    </citation>
    <scope>NUCLEOTIDE SEQUENCE [LARGE SCALE GENOMIC DNA]</scope>
    <source>
        <strain>K12 / MG1655 / ATCC 47076</strain>
    </source>
</reference>
<reference key="3">
    <citation type="journal article" date="2006" name="Mol. Syst. Biol.">
        <title>Highly accurate genome sequences of Escherichia coli K-12 strains MG1655 and W3110.</title>
        <authorList>
            <person name="Hayashi K."/>
            <person name="Morooka N."/>
            <person name="Yamamoto Y."/>
            <person name="Fujita K."/>
            <person name="Isono K."/>
            <person name="Choi S."/>
            <person name="Ohtsubo E."/>
            <person name="Baba T."/>
            <person name="Wanner B.L."/>
            <person name="Mori H."/>
            <person name="Horiuchi T."/>
        </authorList>
    </citation>
    <scope>NUCLEOTIDE SEQUENCE [LARGE SCALE GENOMIC DNA]</scope>
    <source>
        <strain>K12 / W3110 / ATCC 27325 / DSM 5911</strain>
    </source>
</reference>
<reference key="4">
    <citation type="journal article" date="2011" name="Proc. Natl. Acad. Sci. U.S.A.">
        <title>Discovery of epoxyqueuosine (oQ) reductase reveals parallels between halorespiration and tRNA modification.</title>
        <authorList>
            <person name="Miles Z.D."/>
            <person name="McCarty R.M."/>
            <person name="Molnar G."/>
            <person name="Bandarian V."/>
        </authorList>
    </citation>
    <scope>DISRUPTION PHENOTYPE</scope>
    <scope>PATHWAY</scope>
    <scope>GENE NAME</scope>
    <source>
        <strain>K12</strain>
    </source>
</reference>
<name>QUEG_ECOLI</name>